<organism>
    <name type="scientific">Neisseria gonorrhoeae (strain ATCC 700825 / FA 1090)</name>
    <dbReference type="NCBI Taxonomy" id="242231"/>
    <lineage>
        <taxon>Bacteria</taxon>
        <taxon>Pseudomonadati</taxon>
        <taxon>Pseudomonadota</taxon>
        <taxon>Betaproteobacteria</taxon>
        <taxon>Neisseriales</taxon>
        <taxon>Neisseriaceae</taxon>
        <taxon>Neisseria</taxon>
    </lineage>
</organism>
<keyword id="KW-0030">Aminoacyl-tRNA synthetase</keyword>
<keyword id="KW-0067">ATP-binding</keyword>
<keyword id="KW-0963">Cytoplasm</keyword>
<keyword id="KW-0436">Ligase</keyword>
<keyword id="KW-0479">Metal-binding</keyword>
<keyword id="KW-0547">Nucleotide-binding</keyword>
<keyword id="KW-0648">Protein biosynthesis</keyword>
<keyword id="KW-1185">Reference proteome</keyword>
<keyword id="KW-0694">RNA-binding</keyword>
<keyword id="KW-0820">tRNA-binding</keyword>
<keyword id="KW-0862">Zinc</keyword>
<name>SYT_NEIG1</name>
<comment type="function">
    <text evidence="1">Catalyzes the attachment of threonine to tRNA(Thr) in a two-step reaction: L-threonine is first activated by ATP to form Thr-AMP and then transferred to the acceptor end of tRNA(Thr). Also edits incorrectly charged L-seryl-tRNA(Thr).</text>
</comment>
<comment type="catalytic activity">
    <reaction evidence="1">
        <text>tRNA(Thr) + L-threonine + ATP = L-threonyl-tRNA(Thr) + AMP + diphosphate + H(+)</text>
        <dbReference type="Rhea" id="RHEA:24624"/>
        <dbReference type="Rhea" id="RHEA-COMP:9670"/>
        <dbReference type="Rhea" id="RHEA-COMP:9704"/>
        <dbReference type="ChEBI" id="CHEBI:15378"/>
        <dbReference type="ChEBI" id="CHEBI:30616"/>
        <dbReference type="ChEBI" id="CHEBI:33019"/>
        <dbReference type="ChEBI" id="CHEBI:57926"/>
        <dbReference type="ChEBI" id="CHEBI:78442"/>
        <dbReference type="ChEBI" id="CHEBI:78534"/>
        <dbReference type="ChEBI" id="CHEBI:456215"/>
        <dbReference type="EC" id="6.1.1.3"/>
    </reaction>
</comment>
<comment type="cofactor">
    <cofactor evidence="1">
        <name>Zn(2+)</name>
        <dbReference type="ChEBI" id="CHEBI:29105"/>
    </cofactor>
    <text evidence="1">Binds 1 zinc ion per subunit.</text>
</comment>
<comment type="subunit">
    <text evidence="1">Homodimer.</text>
</comment>
<comment type="subcellular location">
    <subcellularLocation>
        <location evidence="1">Cytoplasm</location>
    </subcellularLocation>
</comment>
<comment type="similarity">
    <text evidence="1">Belongs to the class-II aminoacyl-tRNA synthetase family.</text>
</comment>
<dbReference type="EC" id="6.1.1.3" evidence="1"/>
<dbReference type="EMBL" id="AE004969">
    <property type="protein sequence ID" value="AAW89043.1"/>
    <property type="molecule type" value="Genomic_DNA"/>
</dbReference>
<dbReference type="RefSeq" id="WP_010951023.1">
    <property type="nucleotide sequence ID" value="NC_002946.2"/>
</dbReference>
<dbReference type="RefSeq" id="YP_207455.1">
    <property type="nucleotide sequence ID" value="NC_002946.2"/>
</dbReference>
<dbReference type="SMR" id="Q5F9U4"/>
<dbReference type="STRING" id="242231.NGO_0295"/>
<dbReference type="KEGG" id="ngo:NGO_0295"/>
<dbReference type="PATRIC" id="fig|242231.10.peg.366"/>
<dbReference type="HOGENOM" id="CLU_008554_0_1_4"/>
<dbReference type="Proteomes" id="UP000000535">
    <property type="component" value="Chromosome"/>
</dbReference>
<dbReference type="GO" id="GO:0005829">
    <property type="term" value="C:cytosol"/>
    <property type="evidence" value="ECO:0007669"/>
    <property type="project" value="TreeGrafter"/>
</dbReference>
<dbReference type="GO" id="GO:0005524">
    <property type="term" value="F:ATP binding"/>
    <property type="evidence" value="ECO:0007669"/>
    <property type="project" value="UniProtKB-UniRule"/>
</dbReference>
<dbReference type="GO" id="GO:0046872">
    <property type="term" value="F:metal ion binding"/>
    <property type="evidence" value="ECO:0007669"/>
    <property type="project" value="UniProtKB-KW"/>
</dbReference>
<dbReference type="GO" id="GO:0004829">
    <property type="term" value="F:threonine-tRNA ligase activity"/>
    <property type="evidence" value="ECO:0007669"/>
    <property type="project" value="UniProtKB-UniRule"/>
</dbReference>
<dbReference type="GO" id="GO:0000049">
    <property type="term" value="F:tRNA binding"/>
    <property type="evidence" value="ECO:0007669"/>
    <property type="project" value="UniProtKB-KW"/>
</dbReference>
<dbReference type="GO" id="GO:0006435">
    <property type="term" value="P:threonyl-tRNA aminoacylation"/>
    <property type="evidence" value="ECO:0007669"/>
    <property type="project" value="UniProtKB-UniRule"/>
</dbReference>
<dbReference type="CDD" id="cd01667">
    <property type="entry name" value="TGS_ThrRS"/>
    <property type="match status" value="1"/>
</dbReference>
<dbReference type="CDD" id="cd00860">
    <property type="entry name" value="ThrRS_anticodon"/>
    <property type="match status" value="1"/>
</dbReference>
<dbReference type="CDD" id="cd00771">
    <property type="entry name" value="ThrRS_core"/>
    <property type="match status" value="1"/>
</dbReference>
<dbReference type="FunFam" id="3.10.20.30:FF:000005">
    <property type="entry name" value="Threonine--tRNA ligase"/>
    <property type="match status" value="1"/>
</dbReference>
<dbReference type="FunFam" id="3.30.54.20:FF:000002">
    <property type="entry name" value="Threonine--tRNA ligase"/>
    <property type="match status" value="1"/>
</dbReference>
<dbReference type="FunFam" id="3.30.930.10:FF:000002">
    <property type="entry name" value="Threonine--tRNA ligase"/>
    <property type="match status" value="1"/>
</dbReference>
<dbReference type="FunFam" id="3.40.50.800:FF:000001">
    <property type="entry name" value="Threonine--tRNA ligase"/>
    <property type="match status" value="1"/>
</dbReference>
<dbReference type="FunFam" id="3.30.980.10:FF:000005">
    <property type="entry name" value="Threonyl-tRNA synthetase, mitochondrial"/>
    <property type="match status" value="1"/>
</dbReference>
<dbReference type="Gene3D" id="3.10.20.30">
    <property type="match status" value="1"/>
</dbReference>
<dbReference type="Gene3D" id="3.30.54.20">
    <property type="match status" value="1"/>
</dbReference>
<dbReference type="Gene3D" id="3.40.50.800">
    <property type="entry name" value="Anticodon-binding domain"/>
    <property type="match status" value="1"/>
</dbReference>
<dbReference type="Gene3D" id="3.30.930.10">
    <property type="entry name" value="Bira Bifunctional Protein, Domain 2"/>
    <property type="match status" value="1"/>
</dbReference>
<dbReference type="Gene3D" id="3.30.980.10">
    <property type="entry name" value="Threonyl-trna Synthetase, Chain A, domain 2"/>
    <property type="match status" value="1"/>
</dbReference>
<dbReference type="HAMAP" id="MF_00184">
    <property type="entry name" value="Thr_tRNA_synth"/>
    <property type="match status" value="1"/>
</dbReference>
<dbReference type="InterPro" id="IPR002314">
    <property type="entry name" value="aa-tRNA-synt_IIb"/>
</dbReference>
<dbReference type="InterPro" id="IPR006195">
    <property type="entry name" value="aa-tRNA-synth_II"/>
</dbReference>
<dbReference type="InterPro" id="IPR045864">
    <property type="entry name" value="aa-tRNA-synth_II/BPL/LPL"/>
</dbReference>
<dbReference type="InterPro" id="IPR004154">
    <property type="entry name" value="Anticodon-bd"/>
</dbReference>
<dbReference type="InterPro" id="IPR036621">
    <property type="entry name" value="Anticodon-bd_dom_sf"/>
</dbReference>
<dbReference type="InterPro" id="IPR012675">
    <property type="entry name" value="Beta-grasp_dom_sf"/>
</dbReference>
<dbReference type="InterPro" id="IPR004095">
    <property type="entry name" value="TGS"/>
</dbReference>
<dbReference type="InterPro" id="IPR012676">
    <property type="entry name" value="TGS-like"/>
</dbReference>
<dbReference type="InterPro" id="IPR002320">
    <property type="entry name" value="Thr-tRNA-ligase_IIa"/>
</dbReference>
<dbReference type="InterPro" id="IPR018163">
    <property type="entry name" value="Thr/Ala-tRNA-synth_IIc_edit"/>
</dbReference>
<dbReference type="InterPro" id="IPR047246">
    <property type="entry name" value="ThrRS_anticodon"/>
</dbReference>
<dbReference type="InterPro" id="IPR033728">
    <property type="entry name" value="ThrRS_core"/>
</dbReference>
<dbReference type="InterPro" id="IPR012947">
    <property type="entry name" value="tRNA_SAD"/>
</dbReference>
<dbReference type="NCBIfam" id="TIGR00418">
    <property type="entry name" value="thrS"/>
    <property type="match status" value="1"/>
</dbReference>
<dbReference type="PANTHER" id="PTHR11451:SF44">
    <property type="entry name" value="THREONINE--TRNA LIGASE, CHLOROPLASTIC_MITOCHONDRIAL 2"/>
    <property type="match status" value="1"/>
</dbReference>
<dbReference type="PANTHER" id="PTHR11451">
    <property type="entry name" value="THREONINE-TRNA LIGASE"/>
    <property type="match status" value="1"/>
</dbReference>
<dbReference type="Pfam" id="PF03129">
    <property type="entry name" value="HGTP_anticodon"/>
    <property type="match status" value="1"/>
</dbReference>
<dbReference type="Pfam" id="PF02824">
    <property type="entry name" value="TGS"/>
    <property type="match status" value="1"/>
</dbReference>
<dbReference type="Pfam" id="PF00587">
    <property type="entry name" value="tRNA-synt_2b"/>
    <property type="match status" value="1"/>
</dbReference>
<dbReference type="Pfam" id="PF07973">
    <property type="entry name" value="tRNA_SAD"/>
    <property type="match status" value="1"/>
</dbReference>
<dbReference type="PRINTS" id="PR01047">
    <property type="entry name" value="TRNASYNTHTHR"/>
</dbReference>
<dbReference type="SMART" id="SM00863">
    <property type="entry name" value="tRNA_SAD"/>
    <property type="match status" value="1"/>
</dbReference>
<dbReference type="SUPFAM" id="SSF52954">
    <property type="entry name" value="Class II aaRS ABD-related"/>
    <property type="match status" value="1"/>
</dbReference>
<dbReference type="SUPFAM" id="SSF55681">
    <property type="entry name" value="Class II aaRS and biotin synthetases"/>
    <property type="match status" value="1"/>
</dbReference>
<dbReference type="SUPFAM" id="SSF81271">
    <property type="entry name" value="TGS-like"/>
    <property type="match status" value="1"/>
</dbReference>
<dbReference type="SUPFAM" id="SSF55186">
    <property type="entry name" value="ThrRS/AlaRS common domain"/>
    <property type="match status" value="1"/>
</dbReference>
<dbReference type="PROSITE" id="PS50862">
    <property type="entry name" value="AA_TRNA_LIGASE_II"/>
    <property type="match status" value="1"/>
</dbReference>
<dbReference type="PROSITE" id="PS51880">
    <property type="entry name" value="TGS"/>
    <property type="match status" value="1"/>
</dbReference>
<evidence type="ECO:0000255" key="1">
    <source>
        <dbReference type="HAMAP-Rule" id="MF_00184"/>
    </source>
</evidence>
<evidence type="ECO:0000255" key="2">
    <source>
        <dbReference type="PROSITE-ProRule" id="PRU01228"/>
    </source>
</evidence>
<proteinExistence type="inferred from homology"/>
<gene>
    <name evidence="1" type="primary">thrS</name>
    <name type="ordered locus">NGO_0295</name>
</gene>
<accession>Q5F9U4</accession>
<feature type="chain" id="PRO_0000101014" description="Threonine--tRNA ligase">
    <location>
        <begin position="1"/>
        <end position="637"/>
    </location>
</feature>
<feature type="domain" description="TGS" evidence="2">
    <location>
        <begin position="1"/>
        <end position="61"/>
    </location>
</feature>
<feature type="region of interest" description="Catalytic" evidence="1">
    <location>
        <begin position="242"/>
        <end position="533"/>
    </location>
</feature>
<feature type="binding site" evidence="1">
    <location>
        <position position="333"/>
    </location>
    <ligand>
        <name>Zn(2+)</name>
        <dbReference type="ChEBI" id="CHEBI:29105"/>
    </ligand>
</feature>
<feature type="binding site" evidence="1">
    <location>
        <position position="384"/>
    </location>
    <ligand>
        <name>Zn(2+)</name>
        <dbReference type="ChEBI" id="CHEBI:29105"/>
    </ligand>
</feature>
<feature type="binding site" evidence="1">
    <location>
        <position position="510"/>
    </location>
    <ligand>
        <name>Zn(2+)</name>
        <dbReference type="ChEBI" id="CHEBI:29105"/>
    </ligand>
</feature>
<sequence>MLNITLPDCSVRQYESPVTVAQIAASIGAGLAKAAVAGKVNGKLVDACDPIVEDSAVQIITPKDQEGIEIIRHSCAHLVGHAVKQLYPNAKMVIGPVIEEGFYYDIATEKPFTPEDVAAIEARMKELIAQDYDVVKIMTPRAEAIKIFQERGEEYKLRLIDDMPEVEAMGIYHHQEYVDMCRGPHVPNTRFLKNFKLTKLAGAYWRGDSNNEMLQRIYGTAWATKDELKDYIQRIEEAEKRDHRKLGKQLDLFHLQDEAPGMVFWHPKGWALWQTIEQHMRKELNAAGYKEVKTPQIMDKTFWEKSGHWDNYKDNMFVTSSEKREYAVKPMNCPGHVQIFNNGLRSYRDLPMRLAEFGSCHRNEPSGALHGLMRVRGFVQDDAHIFCTEDQIVSEARAFNELLVRIYKQFGFHDVSVRLSLRPEKRAGSDDVWDKAEQGLREALTACGVEWGELPGEGAFYGPKIEYHVKDALGRSWQCGTLQLDFVLPERLDAEYVTENNDRARPVMLHRAILGSLERFIGILIENHAGSFPLWLAPVQMVIMNITENQADYCREVAAKLQAAGFRAELDLRNEKIGYKIRDNSQYRFPYQIVIGDKEKQENKVAVRRKAEDLGSLDLDDFIAQLQQEITDALVNH</sequence>
<reference key="1">
    <citation type="submission" date="2003-03" db="EMBL/GenBank/DDBJ databases">
        <title>The complete genome sequence of Neisseria gonorrhoeae.</title>
        <authorList>
            <person name="Lewis L.A."/>
            <person name="Gillaspy A.F."/>
            <person name="McLaughlin R.E."/>
            <person name="Gipson M."/>
            <person name="Ducey T.F."/>
            <person name="Ownbey T."/>
            <person name="Hartman K."/>
            <person name="Nydick C."/>
            <person name="Carson M.B."/>
            <person name="Vaughn J."/>
            <person name="Thomson C."/>
            <person name="Song L."/>
            <person name="Lin S."/>
            <person name="Yuan X."/>
            <person name="Najar F."/>
            <person name="Zhan M."/>
            <person name="Ren Q."/>
            <person name="Zhu H."/>
            <person name="Qi S."/>
            <person name="Kenton S.M."/>
            <person name="Lai H."/>
            <person name="White J.D."/>
            <person name="Clifton S."/>
            <person name="Roe B.A."/>
            <person name="Dyer D.W."/>
        </authorList>
    </citation>
    <scope>NUCLEOTIDE SEQUENCE [LARGE SCALE GENOMIC DNA]</scope>
    <source>
        <strain>ATCC 700825 / FA 1090</strain>
    </source>
</reference>
<protein>
    <recommendedName>
        <fullName evidence="1">Threonine--tRNA ligase</fullName>
        <ecNumber evidence="1">6.1.1.3</ecNumber>
    </recommendedName>
    <alternativeName>
        <fullName evidence="1">Threonyl-tRNA synthetase</fullName>
        <shortName evidence="1">ThrRS</shortName>
    </alternativeName>
</protein>